<protein>
    <recommendedName>
        <fullName>Increasing suppression factor 1</fullName>
    </recommendedName>
    <alternativeName>
        <fullName>Mitochondrial biogenesis regulation protein 3</fullName>
    </alternativeName>
</protein>
<gene>
    <name type="primary">ISF1</name>
    <name type="synonym">MBR3</name>
    <name type="ORF">SCRG_01973</name>
</gene>
<accession>B3LLX4</accession>
<sequence>MIASEIFERGVQDPFCQDCDYEDETDVQSFLGSNDLNDFVNSKLASFSFQNSSKSNNSHHSSSTNAGNTSRHIGNHTIGHHLRKIKTAPHHLYGFVPANSTNNSNEPIRPSPRRIRANSSTLIHQLSRQSTRQSSLGDAADSCFDHKCIKPRSRHSSCYGIPTHLYGLEKYVSSELDSLAVANDQSNDLTSPLTSVSTPASNSNSYLNLNSSSAAYPSSYLSNEKNNRLKLISHGKISSNNVPGHSGNLNHYHRERTPSNLRRESFSLLSNGSSSSPLQTRNNSYSNSLVKSPSNSSLNTSVASSNEESIPHTSNCLEERNPRRKSFIKLSLASSFSN</sequence>
<reference key="1">
    <citation type="submission" date="2005-03" db="EMBL/GenBank/DDBJ databases">
        <title>Annotation of the Saccharomyces cerevisiae RM11-1a genome.</title>
        <authorList>
            <consortium name="The Broad Institute Genome Sequencing Platform"/>
            <person name="Birren B.W."/>
            <person name="Lander E.S."/>
            <person name="Galagan J.E."/>
            <person name="Nusbaum C."/>
            <person name="Devon K."/>
            <person name="Cuomo C."/>
            <person name="Jaffe D.B."/>
            <person name="Butler J."/>
            <person name="Alvarez P."/>
            <person name="Gnerre S."/>
            <person name="Grabherr M."/>
            <person name="Kleber M."/>
            <person name="Mauceli E.W."/>
            <person name="Brockman W."/>
            <person name="MacCallum I.A."/>
            <person name="Rounsley S."/>
            <person name="Young S.K."/>
            <person name="LaButti K."/>
            <person name="Pushparaj V."/>
            <person name="DeCaprio D."/>
            <person name="Crawford M."/>
            <person name="Koehrsen M."/>
            <person name="Engels R."/>
            <person name="Montgomery P."/>
            <person name="Pearson M."/>
            <person name="Howarth C."/>
            <person name="Larson L."/>
            <person name="Luoma S."/>
            <person name="White J."/>
            <person name="O'Leary S."/>
            <person name="Kodira C.D."/>
            <person name="Zeng Q."/>
            <person name="Yandava C."/>
            <person name="Alvarado L."/>
            <person name="Pratt S."/>
            <person name="Kruglyak L."/>
        </authorList>
    </citation>
    <scope>NUCLEOTIDE SEQUENCE [LARGE SCALE GENOMIC DNA]</scope>
    <source>
        <strain>RM11-1a</strain>
    </source>
</reference>
<keyword id="KW-0597">Phosphoprotein</keyword>
<comment type="function">
    <text evidence="1">Could influence the NAM7/UPF1 function, possibly at the level of mRNA turnover. Participates in mitochondrial biogenesis (By similarity).</text>
</comment>
<comment type="similarity">
    <text evidence="4">Belongs to the ISF1/MBR1 family.</text>
</comment>
<name>ISF1_YEAS1</name>
<dbReference type="EMBL" id="CH408047">
    <property type="protein sequence ID" value="EDV11577.1"/>
    <property type="molecule type" value="Genomic_DNA"/>
</dbReference>
<dbReference type="HOGENOM" id="CLU_070894_0_0_1"/>
<dbReference type="OrthoDB" id="5213at4893"/>
<dbReference type="Proteomes" id="UP000008335">
    <property type="component" value="Unassembled WGS sequence"/>
</dbReference>
<dbReference type="InterPro" id="IPR031443">
    <property type="entry name" value="Mbr1"/>
</dbReference>
<dbReference type="Pfam" id="PF17058">
    <property type="entry name" value="MBR1"/>
    <property type="match status" value="2"/>
</dbReference>
<organism>
    <name type="scientific">Saccharomyces cerevisiae (strain RM11-1a)</name>
    <name type="common">Baker's yeast</name>
    <dbReference type="NCBI Taxonomy" id="285006"/>
    <lineage>
        <taxon>Eukaryota</taxon>
        <taxon>Fungi</taxon>
        <taxon>Dikarya</taxon>
        <taxon>Ascomycota</taxon>
        <taxon>Saccharomycotina</taxon>
        <taxon>Saccharomycetes</taxon>
        <taxon>Saccharomycetales</taxon>
        <taxon>Saccharomycetaceae</taxon>
        <taxon>Saccharomyces</taxon>
    </lineage>
</organism>
<proteinExistence type="inferred from homology"/>
<feature type="chain" id="PRO_0000408856" description="Increasing suppression factor 1">
    <location>
        <begin position="1"/>
        <end position="338"/>
    </location>
</feature>
<feature type="region of interest" description="Disordered" evidence="3">
    <location>
        <begin position="50"/>
        <end position="75"/>
    </location>
</feature>
<feature type="region of interest" description="Disordered" evidence="3">
    <location>
        <begin position="267"/>
        <end position="318"/>
    </location>
</feature>
<feature type="compositionally biased region" description="Low complexity" evidence="3">
    <location>
        <begin position="50"/>
        <end position="70"/>
    </location>
</feature>
<feature type="compositionally biased region" description="Low complexity" evidence="3">
    <location>
        <begin position="267"/>
        <end position="306"/>
    </location>
</feature>
<feature type="compositionally biased region" description="Polar residues" evidence="3">
    <location>
        <begin position="307"/>
        <end position="316"/>
    </location>
</feature>
<feature type="modified residue" description="Phosphoserine" evidence="2">
    <location>
        <position position="119"/>
    </location>
</feature>
<evidence type="ECO:0000250" key="1"/>
<evidence type="ECO:0000250" key="2">
    <source>
        <dbReference type="UniProtKB" id="P32488"/>
    </source>
</evidence>
<evidence type="ECO:0000256" key="3">
    <source>
        <dbReference type="SAM" id="MobiDB-lite"/>
    </source>
</evidence>
<evidence type="ECO:0000305" key="4"/>